<comment type="function">
    <text evidence="2">Catalyzes the reversible phosphorolytic breakdown of the N-glycosidic bond in the beta-(deoxy)ribonucleoside molecules, with the formation of the corresponding free purine bases and pentose-1-phosphate.</text>
</comment>
<comment type="catalytic activity">
    <reaction evidence="2">
        <text>a purine D-ribonucleoside + phosphate = a purine nucleobase + alpha-D-ribose 1-phosphate</text>
        <dbReference type="Rhea" id="RHEA:19805"/>
        <dbReference type="ChEBI" id="CHEBI:26386"/>
        <dbReference type="ChEBI" id="CHEBI:43474"/>
        <dbReference type="ChEBI" id="CHEBI:57720"/>
        <dbReference type="ChEBI" id="CHEBI:142355"/>
        <dbReference type="EC" id="2.4.2.1"/>
    </reaction>
</comment>
<comment type="catalytic activity">
    <reaction evidence="2">
        <text>a purine 2'-deoxy-D-ribonucleoside + phosphate = a purine nucleobase + 2-deoxy-alpha-D-ribose 1-phosphate</text>
        <dbReference type="Rhea" id="RHEA:36431"/>
        <dbReference type="ChEBI" id="CHEBI:26386"/>
        <dbReference type="ChEBI" id="CHEBI:43474"/>
        <dbReference type="ChEBI" id="CHEBI:57259"/>
        <dbReference type="ChEBI" id="CHEBI:142361"/>
        <dbReference type="EC" id="2.4.2.1"/>
    </reaction>
</comment>
<comment type="subunit">
    <text evidence="2">Homohexamer; trimer of homodimers.</text>
</comment>
<comment type="similarity">
    <text evidence="2">Belongs to the PNP/UDP phosphorylase family.</text>
</comment>
<evidence type="ECO:0000250" key="1">
    <source>
        <dbReference type="UniProtKB" id="P50389"/>
    </source>
</evidence>
<evidence type="ECO:0000255" key="2">
    <source>
        <dbReference type="HAMAP-Rule" id="MF_01627"/>
    </source>
</evidence>
<gene>
    <name evidence="2" type="primary">deoD</name>
    <name type="ordered locus">Teth514_1318</name>
</gene>
<proteinExistence type="inferred from homology"/>
<name>DEOD_THEPX</name>
<reference key="1">
    <citation type="submission" date="2008-01" db="EMBL/GenBank/DDBJ databases">
        <title>Complete sequence of Thermoanaerobacter sp. X514.</title>
        <authorList>
            <consortium name="US DOE Joint Genome Institute"/>
            <person name="Copeland A."/>
            <person name="Lucas S."/>
            <person name="Lapidus A."/>
            <person name="Barry K."/>
            <person name="Glavina del Rio T."/>
            <person name="Dalin E."/>
            <person name="Tice H."/>
            <person name="Pitluck S."/>
            <person name="Bruce D."/>
            <person name="Goodwin L."/>
            <person name="Saunders E."/>
            <person name="Brettin T."/>
            <person name="Detter J.C."/>
            <person name="Han C."/>
            <person name="Schmutz J."/>
            <person name="Larimer F."/>
            <person name="Land M."/>
            <person name="Hauser L."/>
            <person name="Kyrpides N."/>
            <person name="Kim E."/>
            <person name="Hemme C."/>
            <person name="Fields M.W."/>
            <person name="He Z."/>
            <person name="Zhou J."/>
            <person name="Richardson P."/>
        </authorList>
    </citation>
    <scope>NUCLEOTIDE SEQUENCE [LARGE SCALE GENOMIC DNA]</scope>
    <source>
        <strain>X514</strain>
    </source>
</reference>
<sequence>MSIHIGAKENEIAQTVLLPGDPLRAKYIAENFLEDAKCYNEVRGMYGFTGYYKGKRVSVQGTGMGVPSLSIYVNELINSYNVKNLIRIGTCGSLQPDIKLRDIVIAMSSSTDSAINKIRFNGMDYAPTASFKLLKKAYDKAMELGIQPKVGNILTTDTFYNDDPDSWKLWAKFGVLAVEMETAGLYTLAAKYNVDALTILTVSDSLVTGEATTAEERQKTFMNMVKIALEIAE</sequence>
<accession>B0K6Y4</accession>
<protein>
    <recommendedName>
        <fullName evidence="2">Purine nucleoside phosphorylase DeoD-type</fullName>
        <shortName evidence="2">PNP</shortName>
        <ecNumber evidence="2">2.4.2.1</ecNumber>
    </recommendedName>
</protein>
<keyword id="KW-0328">Glycosyltransferase</keyword>
<keyword id="KW-0808">Transferase</keyword>
<dbReference type="EC" id="2.4.2.1" evidence="2"/>
<dbReference type="EMBL" id="CP000923">
    <property type="protein sequence ID" value="ABY92610.1"/>
    <property type="molecule type" value="Genomic_DNA"/>
</dbReference>
<dbReference type="RefSeq" id="WP_003867214.1">
    <property type="nucleotide sequence ID" value="NC_010320.1"/>
</dbReference>
<dbReference type="SMR" id="B0K6Y4"/>
<dbReference type="KEGG" id="tex:Teth514_1318"/>
<dbReference type="HOGENOM" id="CLU_068457_2_0_9"/>
<dbReference type="Proteomes" id="UP000002155">
    <property type="component" value="Chromosome"/>
</dbReference>
<dbReference type="GO" id="GO:0005829">
    <property type="term" value="C:cytosol"/>
    <property type="evidence" value="ECO:0007669"/>
    <property type="project" value="TreeGrafter"/>
</dbReference>
<dbReference type="GO" id="GO:0004731">
    <property type="term" value="F:purine-nucleoside phosphorylase activity"/>
    <property type="evidence" value="ECO:0007669"/>
    <property type="project" value="UniProtKB-UniRule"/>
</dbReference>
<dbReference type="GO" id="GO:0006152">
    <property type="term" value="P:purine nucleoside catabolic process"/>
    <property type="evidence" value="ECO:0007669"/>
    <property type="project" value="TreeGrafter"/>
</dbReference>
<dbReference type="CDD" id="cd09006">
    <property type="entry name" value="PNP_EcPNPI-like"/>
    <property type="match status" value="1"/>
</dbReference>
<dbReference type="Gene3D" id="3.40.50.1580">
    <property type="entry name" value="Nucleoside phosphorylase domain"/>
    <property type="match status" value="1"/>
</dbReference>
<dbReference type="HAMAP" id="MF_01627">
    <property type="entry name" value="Pur_nucleosid_phosp"/>
    <property type="match status" value="1"/>
</dbReference>
<dbReference type="InterPro" id="IPR004402">
    <property type="entry name" value="DeoD-type"/>
</dbReference>
<dbReference type="InterPro" id="IPR018016">
    <property type="entry name" value="Nucleoside_phosphorylase_CS"/>
</dbReference>
<dbReference type="InterPro" id="IPR000845">
    <property type="entry name" value="Nucleoside_phosphorylase_d"/>
</dbReference>
<dbReference type="InterPro" id="IPR035994">
    <property type="entry name" value="Nucleoside_phosphorylase_sf"/>
</dbReference>
<dbReference type="NCBIfam" id="TIGR00107">
    <property type="entry name" value="deoD"/>
    <property type="match status" value="1"/>
</dbReference>
<dbReference type="NCBIfam" id="NF004489">
    <property type="entry name" value="PRK05819.1"/>
    <property type="match status" value="1"/>
</dbReference>
<dbReference type="PANTHER" id="PTHR43691:SF11">
    <property type="entry name" value="FI09636P-RELATED"/>
    <property type="match status" value="1"/>
</dbReference>
<dbReference type="PANTHER" id="PTHR43691">
    <property type="entry name" value="URIDINE PHOSPHORYLASE"/>
    <property type="match status" value="1"/>
</dbReference>
<dbReference type="Pfam" id="PF01048">
    <property type="entry name" value="PNP_UDP_1"/>
    <property type="match status" value="1"/>
</dbReference>
<dbReference type="SUPFAM" id="SSF53167">
    <property type="entry name" value="Purine and uridine phosphorylases"/>
    <property type="match status" value="1"/>
</dbReference>
<dbReference type="PROSITE" id="PS01232">
    <property type="entry name" value="PNP_UDP_1"/>
    <property type="match status" value="1"/>
</dbReference>
<organism>
    <name type="scientific">Thermoanaerobacter sp. (strain X514)</name>
    <dbReference type="NCBI Taxonomy" id="399726"/>
    <lineage>
        <taxon>Bacteria</taxon>
        <taxon>Bacillati</taxon>
        <taxon>Bacillota</taxon>
        <taxon>Clostridia</taxon>
        <taxon>Thermoanaerobacterales</taxon>
        <taxon>Thermoanaerobacteraceae</taxon>
        <taxon>Thermoanaerobacter</taxon>
    </lineage>
</organism>
<feature type="chain" id="PRO_1000186242" description="Purine nucleoside phosphorylase DeoD-type">
    <location>
        <begin position="1"/>
        <end position="233"/>
    </location>
</feature>
<feature type="active site" description="Proton donor" evidence="2">
    <location>
        <position position="204"/>
    </location>
</feature>
<feature type="binding site" evidence="1">
    <location>
        <position position="4"/>
    </location>
    <ligand>
        <name>a purine D-ribonucleoside</name>
        <dbReference type="ChEBI" id="CHEBI:142355"/>
        <note>ligand shared between dimeric partners</note>
    </ligand>
</feature>
<feature type="binding site" description="in other chain" evidence="1">
    <location>
        <position position="20"/>
    </location>
    <ligand>
        <name>phosphate</name>
        <dbReference type="ChEBI" id="CHEBI:43474"/>
        <note>ligand shared between dimeric partners</note>
    </ligand>
</feature>
<feature type="binding site" description="in other chain" evidence="1">
    <location>
        <position position="24"/>
    </location>
    <ligand>
        <name>phosphate</name>
        <dbReference type="ChEBI" id="CHEBI:43474"/>
        <note>ligand shared between dimeric partners</note>
    </ligand>
</feature>
<feature type="binding site" evidence="1">
    <location>
        <position position="43"/>
    </location>
    <ligand>
        <name>phosphate</name>
        <dbReference type="ChEBI" id="CHEBI:43474"/>
        <note>ligand shared between dimeric partners</note>
    </ligand>
</feature>
<feature type="binding site" description="in other chain" evidence="1">
    <location>
        <begin position="87"/>
        <end position="90"/>
    </location>
    <ligand>
        <name>phosphate</name>
        <dbReference type="ChEBI" id="CHEBI:43474"/>
        <note>ligand shared between dimeric partners</note>
    </ligand>
</feature>
<feature type="binding site" description="in other chain" evidence="1">
    <location>
        <begin position="179"/>
        <end position="181"/>
    </location>
    <ligand>
        <name>a purine D-ribonucleoside</name>
        <dbReference type="ChEBI" id="CHEBI:142355"/>
        <note>ligand shared between dimeric partners</note>
    </ligand>
</feature>
<feature type="binding site" description="in other chain" evidence="1">
    <location>
        <begin position="203"/>
        <end position="204"/>
    </location>
    <ligand>
        <name>a purine D-ribonucleoside</name>
        <dbReference type="ChEBI" id="CHEBI:142355"/>
        <note>ligand shared between dimeric partners</note>
    </ligand>
</feature>
<feature type="site" description="Important for catalytic activity" evidence="2">
    <location>
        <position position="217"/>
    </location>
</feature>